<proteinExistence type="evidence at protein level"/>
<sequence>MVGWVCISLVVLATTTAGLTRNLYELKIECPHTVGLGQGYVTGSVETTPILLTQVTDLKIESSCNFDLHVPSTSIQKYNQVEWAKKSSTTESTSAGATTFEAKTKEVSLKGTCNIPVTTFEAAYKSRKTVICYDLACNQTHCLPTVHLIAPVQTCMSVRSCMIGLLSSRIQVIYEKTYCVTGQLVEGLCFIPTHTIALTQPGHTYDTMTLPITCFLVAKKLGTQLKIAVELEKLITASGCTENSFQGYYICFLGKHSEPLFVPMMDDYRSAELFTRMVLNPRGEDHDPDQNGQGLMRIAGPITAKVPSTETTETMQGIAFAGAPMYSSFSTLVRKADPDYVFSPGIIAESNHSVCDKKTIPLTWTGFLAVSGEIEKITGCTVFCTLVGPGASCEAYSETGIFNISSPTCLVNKVQKFRGSEQRINFMCQRVDQDVIVYCNGQKKVILTKTLVIGQCIYTFTSLFSLIPGVAHSLAVELCVPGLHGWATTALLITFCFGWLLIPTITMIILKILRLLTFSCSHYSTESKFKAILERVKVEYQKTMGSMVCDVCHHECETAKELETHKKSCPEGQCPYCMTMTESTESALQAHFSICKLTNRFQENLKKSLKRPEVKQGCYRTLGVFRYKSRCYVGLVWGVLLTTELIVWAASADTPLMESGWSDTAHGVGIVPMKTDLELDFALASSSSYSYRRKLVNPANKEETLPFHFQLDKQVVHAEIQNLGHWMDGTFNIKTAFHCYGECKKYAYPWQTAKCFFEKDYQYETSWGCNPPDCPGVGTGCTACGVYLDKLRSVGKAYKIVSLKFTRKVCIQLGTEQTCKHIDVNDCLVTPSVKVCLIGTISKLQPGDTLLFLGPLEQGGIILKQWCTTSCVFGDPGDIMSTTTGMKCPEHTGSFRKICGFATTPTCEYQGNTISGFQRMMATRDSFQSFNVTEPHITSNRLEWIDPDSSIKDHINMVLNRDVSFQDLSDNPCKVDLHTQSIDGAWGSGVGFTLVCTVGLTECANFITSIKACDSAMCYGATVTNLLRGSNTVKVVGKGGHSGSLFKCCHDTDCTEEGLAASPPHLDRVTGYNQIDSDKVYDDGAPPCTIKCWFTKSGEWLLGILNGNWVVVAVLIVILILSILLFSFFCPIRGRKNKSN</sequence>
<dbReference type="EMBL" id="U36802">
    <property type="protein sequence ID" value="AAC54560.1"/>
    <property type="molecule type" value="Genomic_RNA"/>
</dbReference>
<dbReference type="EMBL" id="U36801">
    <property type="protein sequence ID" value="AAC54559.1"/>
    <property type="molecule type" value="Genomic_RNA"/>
</dbReference>
<dbReference type="EMBL" id="U36803">
    <property type="protein sequence ID" value="AAC54561.1"/>
    <property type="molecule type" value="Genomic_RNA"/>
</dbReference>
<dbReference type="SMR" id="Q83887"/>
<dbReference type="GlyCosmos" id="Q83887">
    <property type="glycosylation" value="4 sites, No reported glycans"/>
</dbReference>
<dbReference type="GO" id="GO:0044167">
    <property type="term" value="C:host cell endoplasmic reticulum membrane"/>
    <property type="evidence" value="ECO:0007669"/>
    <property type="project" value="UniProtKB-SubCell"/>
</dbReference>
<dbReference type="GO" id="GO:0044178">
    <property type="term" value="C:host cell Golgi membrane"/>
    <property type="evidence" value="ECO:0007669"/>
    <property type="project" value="UniProtKB-SubCell"/>
</dbReference>
<dbReference type="GO" id="GO:0033650">
    <property type="term" value="C:host cell mitochondrion"/>
    <property type="evidence" value="ECO:0007669"/>
    <property type="project" value="UniProtKB-SubCell"/>
</dbReference>
<dbReference type="GO" id="GO:0044228">
    <property type="term" value="C:host cell surface"/>
    <property type="evidence" value="ECO:0007669"/>
    <property type="project" value="UniProtKB-SubCell"/>
</dbReference>
<dbReference type="GO" id="GO:0016020">
    <property type="term" value="C:membrane"/>
    <property type="evidence" value="ECO:0007669"/>
    <property type="project" value="UniProtKB-KW"/>
</dbReference>
<dbReference type="GO" id="GO:0055036">
    <property type="term" value="C:virion membrane"/>
    <property type="evidence" value="ECO:0007669"/>
    <property type="project" value="UniProtKB-SubCell"/>
</dbReference>
<dbReference type="GO" id="GO:0008270">
    <property type="term" value="F:zinc ion binding"/>
    <property type="evidence" value="ECO:0007669"/>
    <property type="project" value="UniProtKB-KW"/>
</dbReference>
<dbReference type="GO" id="GO:0039654">
    <property type="term" value="P:fusion of virus membrane with host endosome membrane"/>
    <property type="evidence" value="ECO:0007669"/>
    <property type="project" value="UniProtKB-KW"/>
</dbReference>
<dbReference type="GO" id="GO:0007165">
    <property type="term" value="P:signal transduction"/>
    <property type="evidence" value="ECO:0007669"/>
    <property type="project" value="InterPro"/>
</dbReference>
<dbReference type="GO" id="GO:0046718">
    <property type="term" value="P:symbiont entry into host cell"/>
    <property type="evidence" value="ECO:0007669"/>
    <property type="project" value="UniProtKB-KW"/>
</dbReference>
<dbReference type="GO" id="GO:0052170">
    <property type="term" value="P:symbiont-mediated suppression of host innate immune response"/>
    <property type="evidence" value="ECO:0007669"/>
    <property type="project" value="UniProtKB-KW"/>
</dbReference>
<dbReference type="GO" id="GO:0039527">
    <property type="term" value="P:symbiont-mediated suppression of host TRAF-mediated signal transduction"/>
    <property type="evidence" value="ECO:0000314"/>
    <property type="project" value="UniProtKB"/>
</dbReference>
<dbReference type="GO" id="GO:0019062">
    <property type="term" value="P:virion attachment to host cell"/>
    <property type="evidence" value="ECO:0007669"/>
    <property type="project" value="UniProtKB-KW"/>
</dbReference>
<dbReference type="Gene3D" id="1.10.8.1320">
    <property type="match status" value="1"/>
</dbReference>
<dbReference type="InterPro" id="IPR016402">
    <property type="entry name" value="Envelope_glycoprot_Hantavirus"/>
</dbReference>
<dbReference type="InterPro" id="IPR048791">
    <property type="entry name" value="Gc_C_bunya"/>
</dbReference>
<dbReference type="InterPro" id="IPR048790">
    <property type="entry name" value="Gn-B_hanta"/>
</dbReference>
<dbReference type="InterPro" id="IPR002532">
    <property type="entry name" value="Hanta_Gc_N"/>
</dbReference>
<dbReference type="InterPro" id="IPR002534">
    <property type="entry name" value="Hanta_Gn-H"/>
</dbReference>
<dbReference type="InterPro" id="IPR012316">
    <property type="entry name" value="ITAM_motif_hantavir-typ"/>
</dbReference>
<dbReference type="Pfam" id="PF20682">
    <property type="entry name" value="Hanta_Gc_C"/>
    <property type="match status" value="1"/>
</dbReference>
<dbReference type="Pfam" id="PF01561">
    <property type="entry name" value="Hanta_Gc_N"/>
    <property type="match status" value="1"/>
</dbReference>
<dbReference type="Pfam" id="PF20679">
    <property type="entry name" value="Hanta_Gn-B"/>
    <property type="match status" value="1"/>
</dbReference>
<dbReference type="Pfam" id="PF01567">
    <property type="entry name" value="Hanta_Gn-H"/>
    <property type="match status" value="1"/>
</dbReference>
<dbReference type="Pfam" id="PF10538">
    <property type="entry name" value="ITAM_Cys-rich"/>
    <property type="match status" value="1"/>
</dbReference>
<dbReference type="PIRSF" id="PIRSF003945">
    <property type="entry name" value="M_poly_HantaV"/>
    <property type="match status" value="1"/>
</dbReference>
<dbReference type="PROSITE" id="PS51056">
    <property type="entry name" value="ITAM_2"/>
    <property type="match status" value="1"/>
</dbReference>
<comment type="function">
    <molecule>Glycoprotein N</molecule>
    <text evidence="2 4 9 10 11 12">Forms homotetramers with glycoprotein C at the surface of the virion (By similarity). Attaches the virion to host cell receptors including integrin ITGAV/ITGB3 (PubMed:15657120). This attachment induces virion internalization predominantly through clathrin-dependent endocytosis (By similarity). Mediates the assembly and budding of infectious virus particles through its interaction with the nucleocapsid protein and the viral genome (By similarity). May dysregulate normal immune and endothelial cell responses through an ITAM motif. Translocates to mitochondria, binds to host TUFM and recruits MAP1LC3B (By similarity). These interactions induce mitochondrial autophagy and therefore destruction of host MAVS leading to inhibition of type I interferon (IFN) responses (By similarity). Concomitant breakdown of glycoprotein N is apparently prevented by the nucleoprotein that may inhibit Gn-stimulated autophagosome-lysosome fusion (By similarity). Interacts with the viral genomic RNA (By similarity). Inhibits the host RIG-I/TBK1 pathway by disrupting the formation of TBK1-TRAF3 complexes and downstream signaling responses required for IFN-beta transcription (PubMed:16973572, PubMed:18614628, PubMed:24390324).</text>
</comment>
<comment type="function">
    <molecule>Glycoprotein C</molecule>
    <text evidence="2 9">Forms homotetramers with glycoprotein N at the surface of the virion. Attaches the virion to host cell receptors including integrin ITGAV/ITGB3 (PubMed:15657120). This attachment induces virion internalization predominantly through clathrin-dependent endocytosis. Class II fusion protein that promotes fusion of viral membrane with host endosomal membrane after endocytosis of the virion (By similarity).</text>
</comment>
<comment type="subunit">
    <molecule>Glycoprotein N</molecule>
    <text evidence="2 3 11 12">Homodimer (By similarity). Homotetramer; forms heterotetrameric Gn-Gc spikes in the pre-fusion conformation (By similarity). Interacts (via C-terminus) with the nucleoprotein (By similarity). Interacts with host TUFM; this interaction contributes to the virus-induced degradation of mitochondria by autophagy, which leads to degradation of host MAVS and inhibition of type I interferon (IFN) responses (By similarity). Interacts with host MAP1LC3B; this interaction contributes to the virus-induced degradation of mitochondria by autophagy, which leads to degradation of host MAVS and inhibition of type I interferon (IFN) responses (By similarity). Interacts (via C-terminus) with host TRAF3 (via N-terminus); this interaction inhibits the formation of TRAF3-TBK1 complexes (PubMed:18614628, PubMed:24390324).</text>
</comment>
<comment type="subunit">
    <molecule>Glycoprotein C</molecule>
    <text evidence="2 4">Homodimer. Homotetramer; forms heterotetrameric Gn-Gc spikes in the pre-fusion conformation. Homotrimer; forms homotrimer in the post-fusion conformation at acidic pH (By similarity). Interacts (via C-terminus) with the nucleoprotein (By similarity).</text>
</comment>
<comment type="subcellular location">
    <molecule>Glycoprotein N</molecule>
    <subcellularLocation>
        <location evidence="2">Virion membrane</location>
        <topology evidence="13">Multi-pass membrane protein</topology>
    </subcellularLocation>
    <subcellularLocation>
        <location evidence="2">Host cell surface</location>
    </subcellularLocation>
    <subcellularLocation>
        <location evidence="2">Host Golgi apparatus membrane</location>
        <topology evidence="2">Multi-pass membrane protein</topology>
    </subcellularLocation>
    <subcellularLocation>
        <location evidence="2">Host endoplasmic reticulum membrane</location>
        <topology evidence="2">Multi-pass membrane protein</topology>
    </subcellularLocation>
    <subcellularLocation>
        <location evidence="2">Host mitochondrion</location>
    </subcellularLocation>
    <text evidence="4">Interaction between glycoprotein N and glycoprotein C is essential for proper targeting of glycoprotein N to the host Golgi complex, where virion budding occurs.</text>
</comment>
<comment type="subcellular location">
    <molecule>Glycoprotein C</molecule>
    <subcellularLocation>
        <location evidence="2">Virion membrane</location>
        <topology evidence="13">Single-pass type I membrane protein</topology>
    </subcellularLocation>
    <subcellularLocation>
        <location evidence="2">Host cell surface</location>
    </subcellularLocation>
    <subcellularLocation>
        <location evidence="2">Host Golgi apparatus membrane</location>
        <topology evidence="2">Single-pass type I membrane protein</topology>
    </subcellularLocation>
    <subcellularLocation>
        <location evidence="2">Host endoplasmic reticulum membrane</location>
        <topology evidence="2">Single-pass type I membrane protein</topology>
    </subcellularLocation>
    <text evidence="2 13">Budding probably takes place at the host Golgi (Probable). Glycoprotein C cytoplasmic tail is important for efficient Golgi localization (By similarity).</text>
</comment>
<comment type="domain">
    <molecule>Glycoprotein N</molecule>
    <text evidence="2 4 6 10 11 12">The YxxL motif at the C-terminus is indispensable for the interaction with MAP1LC3B and for the Gn-mediated induction of mitochondrial autophagy (By similarity). The cytoplasmic tail is involved in the inhibition of the host innate immune response (PubMed:16973572, PubMed:18614628, PubMed:24390324). The C-terminus of the cytoplasmic tail is involved in binding to the viral genome and the nucleocapsid (By similarity). Contains 2 contiguous zinc-fingers (By similarity).</text>
</comment>
<comment type="domain">
    <molecule>Glycoprotein C</molecule>
    <text evidence="4">The C-terminus is necessary for proper localization in the Golgi (By similarity). The cytoplasmic tail is involved in binding to the nucleocapsid (By similarity).</text>
</comment>
<comment type="PTM">
    <molecule>Envelopment polyprotein</molecule>
    <text evidence="2">Envelope polyprotein precursor is quickly cleaved in vivo just after synthesis, presumably by host signal peptidase.</text>
</comment>
<comment type="similarity">
    <text evidence="13">Belongs to the hantavirus envelope glycoprotein family.</text>
</comment>
<organismHost>
    <name type="scientific">Homo sapiens</name>
    <name type="common">Human</name>
    <dbReference type="NCBI Taxonomy" id="9606"/>
</organismHost>
<organismHost>
    <name type="scientific">Peromyscus leucopus</name>
    <name type="common">White-footed mouse</name>
    <dbReference type="NCBI Taxonomy" id="10041"/>
</organismHost>
<name>GP_NYV</name>
<reference key="1">
    <citation type="journal article" date="1995" name="J. Virol.">
        <title>Molecular linkage of hantavirus pulmonary syndrome to the white-footed mouse, Peromyscus leucopus: genetic characterization of the M genome of New York virus.</title>
        <authorList>
            <person name="Hjelle B."/>
            <person name="Lee S.-W."/>
            <person name="Song W."/>
            <person name="Torrez-Martinez N."/>
            <person name="Song J.-W."/>
            <person name="Yanagihara R."/>
            <person name="Gavrilovskaya I.N."/>
            <person name="Mackow E.R."/>
        </authorList>
    </citation>
    <scope>NUCLEOTIDE SEQUENCE [GENOMIC RNA]</scope>
    <source>
        <strain>Isolate New York-1</strain>
        <strain>Isolate New York-2</strain>
        <strain>Isolate Rhode Island-1</strain>
    </source>
</reference>
<reference key="2">
    <citation type="journal article" date="2003" name="J. Virol.">
        <title>Hantavirus pulmonary syndrome-associated hantaviruses contain conserved and functional ITAM signaling elements.</title>
        <authorList>
            <person name="Geimonen E."/>
            <person name="LaMonica R."/>
            <person name="Springer K."/>
            <person name="Farooqui Y."/>
            <person name="Gavrilovskaya I.N."/>
            <person name="Mackow E.R."/>
        </authorList>
    </citation>
    <scope>INTERACTION WITH HUMAN LYN; HUMAN SYK AND HUMAN ZAP70</scope>
</reference>
<reference key="3">
    <citation type="journal article" date="2005" name="Proc. Natl. Acad. Sci. U.S.A.">
        <title>Pathogenic hantaviruses bind plexin-semaphorin-integrin domains present at the apex of inactive, bent alphavbeta3 integrin conformers.</title>
        <authorList>
            <person name="Raymond T."/>
            <person name="Gorbunova E."/>
            <person name="Gavrilovskaya I.N."/>
            <person name="Mackow E.R."/>
        </authorList>
    </citation>
    <scope>FUNCTION (GLYCOPROTEIN N)</scope>
    <scope>FUNCTION (GLYCOPROTEIN C)</scope>
</reference>
<reference key="4">
    <citation type="journal article" date="2006" name="J. Virol.">
        <title>The pathogenic NY-1 hantavirus G1 cytoplasmic tail inhibits RIG-I- and TBK-1-directed interferon responses.</title>
        <authorList>
            <person name="Alff P.J."/>
            <person name="Gavrilovskaya I.N."/>
            <person name="Gorbunova E."/>
            <person name="Endriss K."/>
            <person name="Chong Y."/>
            <person name="Geimonen E."/>
            <person name="Sen N."/>
            <person name="Reich N.C."/>
            <person name="Mackow E.R."/>
        </authorList>
    </citation>
    <scope>FUNCTION (GLYCOPROTEIN N)</scope>
    <scope>DOMAIN (GLYCOPROTEIN N)</scope>
</reference>
<reference key="5">
    <citation type="journal article" date="2008" name="J. Virol.">
        <title>The NY-1 hantavirus Gn cytoplasmic tail coprecipitates TRAF3 and inhibits cellular interferon responses by disrupting TBK1-TRAF3 complex formation.</title>
        <authorList>
            <person name="Alff P.J."/>
            <person name="Sen N."/>
            <person name="Gorbunova E."/>
            <person name="Gavrilovskaya I.N."/>
            <person name="Mackow E.R."/>
        </authorList>
    </citation>
    <scope>FUNCTION (GLYCOPROTEIN N)</scope>
    <scope>INTERACTION WITH HOST TRAF3 (GLYCOPROTEIN N)</scope>
    <scope>DOMAIN (GLYCOPROTEIN N)</scope>
</reference>
<reference key="6">
    <citation type="journal article" date="2014" name="J. Virol.">
        <title>Hantavirus GnT elements mediate TRAF3 binding and inhibit RIG-I/TBK1-directed beta interferon transcription by blocking IRF3 phosphorylation.</title>
        <authorList>
            <person name="Matthys V.S."/>
            <person name="Cimica V."/>
            <person name="Dalrymple N.A."/>
            <person name="Glennon N.B."/>
            <person name="Bianco C."/>
            <person name="Mackow E.R."/>
        </authorList>
    </citation>
    <scope>FUNCTION (GLYCOPROTEIN N)</scope>
    <scope>MUTAGENESIS OF TYR-619; TYR-627; SER-629; ARG-630 AND TYR-632</scope>
    <scope>INTERACTION WITH HOST TRAF3 (GLYCOPROTEIN N)</scope>
    <scope>DOMAIN (GLYCOPROTEIN N)</scope>
</reference>
<reference key="7">
    <citation type="journal article" date="2014" name="Viruses">
        <title>Hantavirus Gn and Gc envelope glycoproteins: key structural units for virus cell entry and virus assembly.</title>
        <authorList>
            <person name="Cifuentes-Munoz N."/>
            <person name="Salazar-Quiroz N."/>
            <person name="Tischler N.D."/>
        </authorList>
    </citation>
    <scope>REVIEW</scope>
</reference>
<accession>Q83887</accession>
<accession>Q83886</accession>
<accession>Q83888</accession>
<evidence type="ECO:0000250" key="1"/>
<evidence type="ECO:0000250" key="2">
    <source>
        <dbReference type="UniProtKB" id="P08668"/>
    </source>
</evidence>
<evidence type="ECO:0000250" key="3">
    <source>
        <dbReference type="UniProtKB" id="P0DTJ1"/>
    </source>
</evidence>
<evidence type="ECO:0000250" key="4">
    <source>
        <dbReference type="UniProtKB" id="P27312"/>
    </source>
</evidence>
<evidence type="ECO:0000250" key="5">
    <source>
        <dbReference type="UniProtKB" id="P41266"/>
    </source>
</evidence>
<evidence type="ECO:0000250" key="6">
    <source>
        <dbReference type="UniProtKB" id="Q9E006"/>
    </source>
</evidence>
<evidence type="ECO:0000255" key="7"/>
<evidence type="ECO:0000255" key="8">
    <source>
        <dbReference type="PROSITE-ProRule" id="PRU00379"/>
    </source>
</evidence>
<evidence type="ECO:0000269" key="9">
    <source>
    </source>
</evidence>
<evidence type="ECO:0000269" key="10">
    <source>
    </source>
</evidence>
<evidence type="ECO:0000269" key="11">
    <source>
    </source>
</evidence>
<evidence type="ECO:0000269" key="12">
    <source>
    </source>
</evidence>
<evidence type="ECO:0000305" key="13"/>
<gene>
    <name type="primary">GP</name>
</gene>
<feature type="signal peptide" evidence="7">
    <location>
        <begin position="1"/>
        <end position="17"/>
    </location>
</feature>
<feature type="chain" id="PRO_0000235995" description="Envelopment polyprotein">
    <location>
        <begin position="18"/>
        <end position="1140"/>
    </location>
</feature>
<feature type="chain" id="PRO_0000235996" description="Glycoprotein N" evidence="1">
    <location>
        <begin position="18"/>
        <end position="652"/>
    </location>
</feature>
<feature type="chain" id="PRO_0000235997" description="Glycoprotein C" evidence="1">
    <location>
        <begin position="653"/>
        <end position="1140"/>
    </location>
</feature>
<feature type="topological domain" description="Lumenal" evidence="7">
    <location>
        <begin position="18"/>
        <end position="489"/>
    </location>
</feature>
<feature type="transmembrane region" description="Helical" evidence="7">
    <location>
        <begin position="490"/>
        <end position="510"/>
    </location>
</feature>
<feature type="topological domain" description="Cytoplasmic" evidence="7">
    <location>
        <begin position="511"/>
        <end position="631"/>
    </location>
</feature>
<feature type="transmembrane region" description="Helical" evidence="7">
    <location>
        <begin position="632"/>
        <end position="652"/>
    </location>
</feature>
<feature type="topological domain" description="Lumenal" evidence="7">
    <location>
        <begin position="653"/>
        <end position="1108"/>
    </location>
</feature>
<feature type="transmembrane region" description="Helical" evidence="7">
    <location>
        <begin position="1109"/>
        <end position="1129"/>
    </location>
</feature>
<feature type="topological domain" description="Cytoplasmic" evidence="7">
    <location>
        <begin position="1130"/>
        <end position="1140"/>
    </location>
</feature>
<feature type="domain" description="ITAM" evidence="8">
    <location>
        <begin position="615"/>
        <end position="638"/>
    </location>
</feature>
<feature type="zinc finger region" description="CCHC-type 1" evidence="6">
    <location>
        <begin position="549"/>
        <end position="569"/>
    </location>
</feature>
<feature type="zinc finger region" description="CCHC-type 2" evidence="6">
    <location>
        <begin position="574"/>
        <end position="595"/>
    </location>
</feature>
<feature type="region of interest" description="Binding to the ribonucleoprotein" evidence="6">
    <location>
        <begin position="520"/>
        <end position="537"/>
    </location>
</feature>
<feature type="region of interest" description="Binding to the ribonucleoprotein" evidence="4">
    <location>
        <begin position="592"/>
        <end position="609"/>
    </location>
</feature>
<feature type="region of interest" description="Binding to the ribonucleoprotein" evidence="6">
    <location>
        <begin position="596"/>
        <end position="607"/>
    </location>
</feature>
<feature type="region of interest" description="Interaction with host TRAF3" evidence="12">
    <location>
        <begin position="611"/>
        <end position="638"/>
    </location>
</feature>
<feature type="region of interest" description="Binding to the ribonucleoprotein" evidence="4">
    <location>
        <begin position="615"/>
        <end position="629"/>
    </location>
</feature>
<feature type="region of interest" description="Fusion loop" evidence="5">
    <location>
        <begin position="761"/>
        <end position="781"/>
    </location>
</feature>
<feature type="region of interest" description="Binding to the ribonucleoprotein" evidence="4">
    <location>
        <begin position="1125"/>
        <end position="1140"/>
    </location>
</feature>
<feature type="short sequence motif" description="YxxL" evidence="2">
    <location>
        <begin position="619"/>
        <end position="622"/>
    </location>
</feature>
<feature type="site" description="Cleavage; by host signal peptidase" evidence="2">
    <location>
        <begin position="652"/>
        <end position="653"/>
    </location>
</feature>
<feature type="modified residue" description="Phosphotyrosine; by host" evidence="8">
    <location>
        <position position="619"/>
    </location>
</feature>
<feature type="modified residue" description="Phosphotyrosine; by host" evidence="8">
    <location>
        <position position="632"/>
    </location>
</feature>
<feature type="glycosylation site" description="N-linked (GlcNAc...) asparagine; by host" evidence="7">
    <location>
        <position position="138"/>
    </location>
</feature>
<feature type="glycosylation site" description="N-linked (GlcNAc...) asparagine; by host" evidence="7">
    <location>
        <position position="351"/>
    </location>
</feature>
<feature type="glycosylation site" description="N-linked (GlcNAc...) asparagine; by host" evidence="7">
    <location>
        <position position="403"/>
    </location>
</feature>
<feature type="glycosylation site" description="N-linked (GlcNAc...) asparagine; by host" evidence="2">
    <location>
        <position position="931"/>
    </location>
</feature>
<feature type="disulfide bond" evidence="6">
    <location>
        <begin position="30"/>
        <end position="155"/>
    </location>
</feature>
<feature type="disulfide bond" evidence="6">
    <location>
        <begin position="64"/>
        <end position="161"/>
    </location>
</feature>
<feature type="disulfide bond" evidence="6">
    <location>
        <begin position="113"/>
        <end position="132"/>
    </location>
</feature>
<feature type="disulfide bond" evidence="6">
    <location>
        <begin position="137"/>
        <end position="142"/>
    </location>
</feature>
<feature type="disulfide bond" evidence="6">
    <location>
        <begin position="179"/>
        <end position="189"/>
    </location>
</feature>
<feature type="disulfide bond" evidence="6">
    <location>
        <begin position="214"/>
        <end position="251"/>
    </location>
</feature>
<feature type="disulfide bond" evidence="6">
    <location>
        <begin position="380"/>
        <end position="439"/>
    </location>
</feature>
<feature type="disulfide bond" evidence="6">
    <location>
        <begin position="384"/>
        <end position="393"/>
    </location>
</feature>
<feature type="disulfide bond" evidence="6">
    <location>
        <begin position="409"/>
        <end position="428"/>
    </location>
</feature>
<feature type="disulfide bond" evidence="6">
    <location>
        <begin position="456"/>
        <end position="479"/>
    </location>
</feature>
<feature type="disulfide bond" evidence="2">
    <location>
        <begin position="739"/>
        <end position="774"/>
    </location>
</feature>
<feature type="disulfide bond" evidence="2">
    <location>
        <begin position="743"/>
        <end position="781"/>
    </location>
</feature>
<feature type="disulfide bond" evidence="2">
    <location>
        <begin position="755"/>
        <end position="888"/>
    </location>
</feature>
<feature type="disulfide bond" evidence="2">
    <location>
        <begin position="769"/>
        <end position="899"/>
    </location>
</feature>
<feature type="disulfide bond" evidence="2">
    <location>
        <begin position="784"/>
        <end position="907"/>
    </location>
</feature>
<feature type="disulfide bond" evidence="2">
    <location>
        <begin position="810"/>
        <end position="819"/>
    </location>
</feature>
<feature type="disulfide bond" evidence="2">
    <location>
        <begin position="827"/>
        <end position="836"/>
    </location>
</feature>
<feature type="disulfide bond" evidence="2">
    <location>
        <begin position="867"/>
        <end position="871"/>
    </location>
</feature>
<feature type="disulfide bond" evidence="2">
    <location>
        <begin position="973"/>
        <end position="1003"/>
    </location>
</feature>
<feature type="disulfide bond" evidence="2">
    <location>
        <begin position="996"/>
        <end position="1048"/>
    </location>
</feature>
<feature type="disulfide bond" evidence="2">
    <location>
        <begin position="1013"/>
        <end position="1018"/>
    </location>
</feature>
<feature type="disulfide bond" evidence="2">
    <location>
        <begin position="1049"/>
        <end position="1054"/>
    </location>
</feature>
<feature type="disulfide bond" evidence="6">
    <location>
        <begin position="1088"/>
        <end position="1092"/>
    </location>
</feature>
<feature type="sequence variant" description="In strain: Isolate New York-2.">
    <original>W</original>
    <variation>F</variation>
    <location>
        <position position="4"/>
    </location>
</feature>
<feature type="sequence variant" description="In strain: Isolate New York-2 and Isolate Rhode Island-1.">
    <original>S</original>
    <variation>F</variation>
    <location>
        <position position="8"/>
    </location>
</feature>
<feature type="sequence variant" description="In strain: Isolate New York-2.">
    <original>E</original>
    <variation>G</variation>
    <location>
        <position position="46"/>
    </location>
</feature>
<feature type="sequence variant" description="In strain: Isolate Rhode Island-1.">
    <original>H</original>
    <variation>Y</variation>
    <location>
        <position position="141"/>
    </location>
</feature>
<feature type="sequence variant" description="In strain: Isolate New York-2.">
    <original>S</original>
    <variation>G</variation>
    <location>
        <position position="238"/>
    </location>
</feature>
<feature type="sequence variant" description="In strain: Isolate Rhode Island-1.">
    <original>F</original>
    <variation>S</variation>
    <location>
        <position position="261"/>
    </location>
</feature>
<feature type="sequence variant" description="In strain: Isolate New York-2.">
    <original>T</original>
    <variation>A</variation>
    <location>
        <position position="314"/>
    </location>
</feature>
<feature type="sequence variant" description="In strain: Isolate Rhode Island-1.">
    <original>M</original>
    <variation>T</variation>
    <location>
        <position position="325"/>
    </location>
</feature>
<feature type="sequence variant" description="In strain: Isolate Rhode Island-1.">
    <original>T</original>
    <variation>A</variation>
    <location>
        <position position="359"/>
    </location>
</feature>
<feature type="sequence variant" description="In strain: Isolate Rhode Island-1.">
    <original>E</original>
    <variation>K</variation>
    <location>
        <position position="394"/>
    </location>
</feature>
<feature type="sequence variant" description="In strain: Isolate Rhode Island-1.">
    <original>V</original>
    <variation>I</variation>
    <location>
        <position position="452"/>
    </location>
</feature>
<feature type="sequence variant" description="In strain: Isolate Rhode Island-1.">
    <original>T</original>
    <variation>A</variation>
    <location>
        <position position="489"/>
    </location>
</feature>
<feature type="sequence variant" description="In strain: Isolate Rhode Island-1.">
    <original>V</original>
    <variation>A</variation>
    <location>
        <position position="551"/>
    </location>
</feature>
<feature type="sequence variant" description="In strain: Isolate Rhode Island-1.">
    <original>Q</original>
    <variation>L</variation>
    <location>
        <position position="589"/>
    </location>
</feature>
<feature type="sequence variant" description="In strain: Isolate Rhode Island-1.">
    <original>C</original>
    <variation>R</variation>
    <location>
        <position position="618"/>
    </location>
</feature>
<feature type="sequence variant" description="In strain: Isolate New York-2.">
    <original>N</original>
    <variation>D</variation>
    <location>
        <position position="697"/>
    </location>
</feature>
<feature type="sequence variant" description="In strain: Isolate Rhode Island-1.">
    <original>V</original>
    <variation>G</variation>
    <location>
        <position position="794"/>
    </location>
</feature>
<feature type="sequence variant" description="In strain: Isolate Rhode Island-1.">
    <original>G</original>
    <variation>S</variation>
    <location>
        <position position="1043"/>
    </location>
</feature>
<feature type="mutagenesis site" description="No effect on the regulation of RIG-I-directed IRF3 activation." evidence="12">
    <original>Y</original>
    <variation>F</variation>
    <location>
        <position position="619"/>
    </location>
</feature>
<feature type="mutagenesis site" description="Complete loss of Gn-dependent regulation of RIG-I-directed IRF3 activation." evidence="12">
    <original>Y</original>
    <variation>A</variation>
    <variation>F</variation>
    <variation>S</variation>
    <location>
        <position position="627"/>
    </location>
</feature>
<feature type="mutagenesis site" description="No effect on the regulation of RIG-I-directed IRF3 activation." evidence="12">
    <original>S</original>
    <variation>A</variation>
    <location>
        <position position="629"/>
    </location>
</feature>
<feature type="mutagenesis site" description="No effect on the regulation of RIG-I-directed IRF3 activation." evidence="12">
    <original>R</original>
    <variation>A</variation>
    <location>
        <position position="630"/>
    </location>
</feature>
<feature type="mutagenesis site" description="No effect on the regulation of RIG-I-directed IRF3 activation." evidence="12">
    <original>Y</original>
    <variation>F</variation>
    <location>
        <position position="632"/>
    </location>
</feature>
<keyword id="KW-1015">Disulfide bond</keyword>
<keyword id="KW-1170">Fusion of virus membrane with host endosomal membrane</keyword>
<keyword id="KW-1168">Fusion of virus membrane with host membrane</keyword>
<keyword id="KW-0325">Glycoprotein</keyword>
<keyword id="KW-1038">Host endoplasmic reticulum</keyword>
<keyword id="KW-1040">Host Golgi apparatus</keyword>
<keyword id="KW-1043">Host membrane</keyword>
<keyword id="KW-1045">Host mitochondrion</keyword>
<keyword id="KW-0945">Host-virus interaction</keyword>
<keyword id="KW-1090">Inhibition of host innate immune response by virus</keyword>
<keyword id="KW-1113">Inhibition of host RLR pathway by virus</keyword>
<keyword id="KW-1110">Inhibition of host TRAFs by virus</keyword>
<keyword id="KW-0472">Membrane</keyword>
<keyword id="KW-0479">Metal-binding</keyword>
<keyword id="KW-0597">Phosphoprotein</keyword>
<keyword id="KW-0677">Repeat</keyword>
<keyword id="KW-0732">Signal</keyword>
<keyword id="KW-0812">Transmembrane</keyword>
<keyword id="KW-1133">Transmembrane helix</keyword>
<keyword id="KW-1161">Viral attachment to host cell</keyword>
<keyword id="KW-0899">Viral immunoevasion</keyword>
<keyword id="KW-1162">Viral penetration into host cytoplasm</keyword>
<keyword id="KW-0946">Virion</keyword>
<keyword id="KW-1160">Virus entry into host cell</keyword>
<keyword id="KW-0862">Zinc</keyword>
<keyword id="KW-0863">Zinc-finger</keyword>
<protein>
    <recommendedName>
        <fullName>Envelopment polyprotein</fullName>
    </recommendedName>
    <alternativeName>
        <fullName>M polyprotein</fullName>
    </alternativeName>
    <component>
        <recommendedName>
            <fullName evidence="2">Glycoprotein N</fullName>
            <shortName>Gn</shortName>
        </recommendedName>
        <alternativeName>
            <fullName>Glycoprotein G1</fullName>
        </alternativeName>
    </component>
    <component>
        <recommendedName>
            <fullName evidence="2">Glycoprotein C</fullName>
            <shortName>Gc</shortName>
        </recommendedName>
        <alternativeName>
            <fullName>Glycoprotein G2</fullName>
        </alternativeName>
    </component>
</protein>
<organism>
    <name type="scientific">New York virus</name>
    <name type="common">NYV</name>
    <dbReference type="NCBI Taxonomy" id="44755"/>
    <lineage>
        <taxon>Viruses</taxon>
        <taxon>Riboviria</taxon>
        <taxon>Orthornavirae</taxon>
        <taxon>Negarnaviricota</taxon>
        <taxon>Polyploviricotina</taxon>
        <taxon>Ellioviricetes</taxon>
        <taxon>Bunyavirales</taxon>
        <taxon>Hantaviridae</taxon>
        <taxon>Mammantavirinae</taxon>
        <taxon>Orthohantavirus</taxon>
        <taxon>Sin Nombre orthohantavirus</taxon>
    </lineage>
</organism>